<reference key="1">
    <citation type="submission" date="2007-08" db="EMBL/GenBank/DDBJ databases">
        <authorList>
            <consortium name="The Vibrio harveyi Genome Sequencing Project"/>
            <person name="Bassler B."/>
            <person name="Clifton S.W."/>
            <person name="Fulton L."/>
            <person name="Delehaunty K."/>
            <person name="Fronick C."/>
            <person name="Harrison M."/>
            <person name="Markivic C."/>
            <person name="Fulton R."/>
            <person name="Tin-Wollam A.-M."/>
            <person name="Shah N."/>
            <person name="Pepin K."/>
            <person name="Nash W."/>
            <person name="Thiruvilangam P."/>
            <person name="Bhonagiri V."/>
            <person name="Waters C."/>
            <person name="Tu K.C."/>
            <person name="Irgon J."/>
            <person name="Wilson R.K."/>
        </authorList>
    </citation>
    <scope>NUCLEOTIDE SEQUENCE [LARGE SCALE GENOMIC DNA]</scope>
    <source>
        <strain>ATCC BAA-1116 / BB120</strain>
    </source>
</reference>
<gene>
    <name type="ordered locus">VIBHAR_03592</name>
</gene>
<protein>
    <recommendedName>
        <fullName evidence="1">Probable Fe(2+)-trafficking protein</fullName>
    </recommendedName>
</protein>
<organism>
    <name type="scientific">Vibrio campbellii (strain ATCC BAA-1116)</name>
    <dbReference type="NCBI Taxonomy" id="2902295"/>
    <lineage>
        <taxon>Bacteria</taxon>
        <taxon>Pseudomonadati</taxon>
        <taxon>Pseudomonadota</taxon>
        <taxon>Gammaproteobacteria</taxon>
        <taxon>Vibrionales</taxon>
        <taxon>Vibrionaceae</taxon>
        <taxon>Vibrio</taxon>
    </lineage>
</organism>
<proteinExistence type="inferred from homology"/>
<name>FETP_VIBC1</name>
<comment type="function">
    <text evidence="1">Could be a mediator in iron transactions between iron acquisition and iron-requiring processes, such as synthesis and/or repair of Fe-S clusters in biosynthetic enzymes.</text>
</comment>
<comment type="similarity">
    <text evidence="1">Belongs to the Fe(2+)-trafficking protein family.</text>
</comment>
<keyword id="KW-0408">Iron</keyword>
<sequence>MSRTVFCARLKKEGEGLDFQLYPGELGKRIFDNISKEAWAQWQHKQTMLINEKKLNMMDPEHRKQLETEMVNFLFEGKDVHIEGYTPPSE</sequence>
<dbReference type="EMBL" id="CP000789">
    <property type="protein sequence ID" value="ABU72527.1"/>
    <property type="molecule type" value="Genomic_DNA"/>
</dbReference>
<dbReference type="RefSeq" id="WP_005425792.1">
    <property type="nucleotide sequence ID" value="NC_022269.1"/>
</dbReference>
<dbReference type="SMR" id="A7MTP0"/>
<dbReference type="KEGG" id="vha:VIBHAR_03592"/>
<dbReference type="PATRIC" id="fig|338187.25.peg.2616"/>
<dbReference type="Proteomes" id="UP000008152">
    <property type="component" value="Chromosome I"/>
</dbReference>
<dbReference type="GO" id="GO:0005829">
    <property type="term" value="C:cytosol"/>
    <property type="evidence" value="ECO:0007669"/>
    <property type="project" value="TreeGrafter"/>
</dbReference>
<dbReference type="GO" id="GO:0005506">
    <property type="term" value="F:iron ion binding"/>
    <property type="evidence" value="ECO:0007669"/>
    <property type="project" value="UniProtKB-UniRule"/>
</dbReference>
<dbReference type="GO" id="GO:0034599">
    <property type="term" value="P:cellular response to oxidative stress"/>
    <property type="evidence" value="ECO:0007669"/>
    <property type="project" value="TreeGrafter"/>
</dbReference>
<dbReference type="FunFam" id="1.10.3880.10:FF:000001">
    <property type="entry name" value="Probable Fe(2+)-trafficking protein"/>
    <property type="match status" value="1"/>
</dbReference>
<dbReference type="Gene3D" id="1.10.3880.10">
    <property type="entry name" value="Fe(II) trafficking protein YggX"/>
    <property type="match status" value="1"/>
</dbReference>
<dbReference type="HAMAP" id="MF_00686">
    <property type="entry name" value="Fe_traffic_YggX"/>
    <property type="match status" value="1"/>
</dbReference>
<dbReference type="InterPro" id="IPR007457">
    <property type="entry name" value="Fe_traffick_prot_YggX"/>
</dbReference>
<dbReference type="InterPro" id="IPR036766">
    <property type="entry name" value="Fe_traffick_prot_YggX_sf"/>
</dbReference>
<dbReference type="NCBIfam" id="NF003817">
    <property type="entry name" value="PRK05408.1"/>
    <property type="match status" value="1"/>
</dbReference>
<dbReference type="PANTHER" id="PTHR36965">
    <property type="entry name" value="FE(2+)-TRAFFICKING PROTEIN-RELATED"/>
    <property type="match status" value="1"/>
</dbReference>
<dbReference type="PANTHER" id="PTHR36965:SF1">
    <property type="entry name" value="FE(2+)-TRAFFICKING PROTEIN-RELATED"/>
    <property type="match status" value="1"/>
</dbReference>
<dbReference type="Pfam" id="PF04362">
    <property type="entry name" value="Iron_traffic"/>
    <property type="match status" value="1"/>
</dbReference>
<dbReference type="PIRSF" id="PIRSF029827">
    <property type="entry name" value="Fe_traffic_YggX"/>
    <property type="match status" value="1"/>
</dbReference>
<dbReference type="SUPFAM" id="SSF111148">
    <property type="entry name" value="YggX-like"/>
    <property type="match status" value="1"/>
</dbReference>
<evidence type="ECO:0000255" key="1">
    <source>
        <dbReference type="HAMAP-Rule" id="MF_00686"/>
    </source>
</evidence>
<feature type="chain" id="PRO_1000045073" description="Probable Fe(2+)-trafficking protein">
    <location>
        <begin position="1"/>
        <end position="90"/>
    </location>
</feature>
<accession>A7MTP0</accession>